<name>DPO3A_THEAQ</name>
<sequence>MGSKLKFAHLHQHTQFSLLDGAAKLQDLLKWVKETTPEDPALAMTDHGNLFGAVEFYKKATAMGVKPIIGYEAYVAAESRFDRKRGKGLDGGYFHLTLLAKDFTGYQNLVRLASRAYLEGFYEKPRIDREILREHAQGLIALSGCLGAEIPQFILQDRLDLAEARLNEDLSIFGDRFFIEIQNHGLPEQKKVNQVLKEFARKYGLGMVATNDGHYVRKEDARAHEVLLAIQSKTTLDDPERWRFPCDEFYVKTPEEMRAMLPEAEWGDEPFDNTVEIARMCDVDLPIGDKMVYRIPRFPLPEGRTEAQYLRELTFLGLLRRYPDRITEAFYREVLRLLGTMPPHGDERALAEALARVEEKAWEELRKRLPPLEGVREWTAEAILHRALYELSVIERMGFPGYFLIVQDYINWARGHGVSVGPGRGSAAGSLVAYAVGITNIDPLRFGLLFERFLNPERVSMPDIDTDFSDRERDRVIQYVRERYGEDKVAQIGTFGSLASKAALKDVARVYGIPHKKAEELAKLIPVQFGKPKPLQEAIQVVPELRAEMEKDERIRQVIEVAMRLEGLNRHASVHAAGVVIAAEPLTDLVPLMRDQEGRPVTQYDMGAVEALGLLKMDFLGLRTLTFLDEARRIVKESKGVELDYDRLPLDDPKTFELLSRGETKGVFQLESGGMTATVRGLKPRRLEDIIALVSLYRPGPMEHIPTYIRRHHGQEPVSYAEFPHAEKYLRPILDETYGIPVYQEQIMQIASQVAGYSLGEADLLRRAMGKKRVEEMQKHRERFVRGAKERGVPEEEANRLFDMLEAFANYGFNKSHAAAYSLLSYQTAYVKAHYPVEFMAALLSVERHDSDKVAEYIRDARALGIPVLPPDVNRSGFDFKVVGEEILFGLSAVKNVGEMAARAILEERERGGPFKSLGDFLKRLPEQVVNKRALESLVKAGALDAFGDRARLLASLEPLLRWAAETRERGRSGLVGLFAEVEEPPLVEASPLDEITMLRYEKEALGIYVSGHPVLRYPGLREVASCTIEELSEFVRELPGKPKVLLSGMVEEVVRKPTRSGGMMARFTLSDETGALEVVVFGRAYEGVSPKLKEDIPLLVLAEVEKGEELRVLAQAVWTLEEVLEAPKALEVEVDHALLDEKGVARLKSLLDEHPGSLPVYLRVLGPFGEALFALREVRVGEEALGLLEAEGYRAYLVPDREVFLQGNGGGPKEEVVPF</sequence>
<dbReference type="EC" id="2.7.7.7"/>
<dbReference type="EMBL" id="AF062920">
    <property type="protein sequence ID" value="AAD44403.1"/>
    <property type="molecule type" value="Genomic_DNA"/>
</dbReference>
<dbReference type="PDB" id="2HPI">
    <property type="method" value="X-ray"/>
    <property type="resolution" value="3.00 A"/>
    <property type="chains" value="A=1-1220"/>
</dbReference>
<dbReference type="PDB" id="2HPM">
    <property type="method" value="X-ray"/>
    <property type="resolution" value="3.70 A"/>
    <property type="chains" value="A=1-1220"/>
</dbReference>
<dbReference type="PDB" id="3E0D">
    <property type="method" value="X-ray"/>
    <property type="resolution" value="4.60 A"/>
    <property type="chains" value="A/B=1-1220"/>
</dbReference>
<dbReference type="PDB" id="4IQJ">
    <property type="method" value="X-ray"/>
    <property type="resolution" value="3.20 A"/>
    <property type="chains" value="A/B/C/D=1-1220"/>
</dbReference>
<dbReference type="PDBsum" id="2HPI"/>
<dbReference type="PDBsum" id="2HPM"/>
<dbReference type="PDBsum" id="3E0D"/>
<dbReference type="PDBsum" id="4IQJ"/>
<dbReference type="SMR" id="Q9XDH5"/>
<dbReference type="BRENDA" id="2.7.7.7">
    <property type="organism ID" value="6334"/>
</dbReference>
<dbReference type="EvolutionaryTrace" id="Q9XDH5"/>
<dbReference type="GO" id="GO:0005737">
    <property type="term" value="C:cytoplasm"/>
    <property type="evidence" value="ECO:0007669"/>
    <property type="project" value="UniProtKB-SubCell"/>
</dbReference>
<dbReference type="GO" id="GO:0008408">
    <property type="term" value="F:3'-5' exonuclease activity"/>
    <property type="evidence" value="ECO:0007669"/>
    <property type="project" value="InterPro"/>
</dbReference>
<dbReference type="GO" id="GO:0003887">
    <property type="term" value="F:DNA-directed DNA polymerase activity"/>
    <property type="evidence" value="ECO:0007669"/>
    <property type="project" value="UniProtKB-KW"/>
</dbReference>
<dbReference type="GO" id="GO:0006260">
    <property type="term" value="P:DNA replication"/>
    <property type="evidence" value="ECO:0007669"/>
    <property type="project" value="UniProtKB-KW"/>
</dbReference>
<dbReference type="CDD" id="cd04485">
    <property type="entry name" value="DnaE_OBF"/>
    <property type="match status" value="1"/>
</dbReference>
<dbReference type="CDD" id="cd12113">
    <property type="entry name" value="PHP_PolIIIA_DnaE3"/>
    <property type="match status" value="1"/>
</dbReference>
<dbReference type="Gene3D" id="1.10.150.870">
    <property type="match status" value="1"/>
</dbReference>
<dbReference type="Gene3D" id="1.10.10.1600">
    <property type="entry name" value="Bacterial DNA polymerase III alpha subunit, thumb domain"/>
    <property type="match status" value="1"/>
</dbReference>
<dbReference type="Gene3D" id="3.20.20.140">
    <property type="entry name" value="Metal-dependent hydrolases"/>
    <property type="match status" value="1"/>
</dbReference>
<dbReference type="InterPro" id="IPR011708">
    <property type="entry name" value="DNA_pol3_alpha_NTPase_dom"/>
</dbReference>
<dbReference type="InterPro" id="IPR041931">
    <property type="entry name" value="DNA_pol3_alpha_thumb_dom"/>
</dbReference>
<dbReference type="InterPro" id="IPR040982">
    <property type="entry name" value="DNA_pol3_finger"/>
</dbReference>
<dbReference type="InterPro" id="IPR004805">
    <property type="entry name" value="DnaE2/DnaE/PolC"/>
</dbReference>
<dbReference type="InterPro" id="IPR029460">
    <property type="entry name" value="DNAPol_HHH"/>
</dbReference>
<dbReference type="InterPro" id="IPR004013">
    <property type="entry name" value="PHP_dom"/>
</dbReference>
<dbReference type="InterPro" id="IPR003141">
    <property type="entry name" value="Pol/His_phosphatase_N"/>
</dbReference>
<dbReference type="InterPro" id="IPR016195">
    <property type="entry name" value="Pol/histidinol_Pase-like"/>
</dbReference>
<dbReference type="NCBIfam" id="TIGR00594">
    <property type="entry name" value="polc"/>
    <property type="match status" value="1"/>
</dbReference>
<dbReference type="NCBIfam" id="NF004226">
    <property type="entry name" value="PRK05673.1"/>
    <property type="match status" value="1"/>
</dbReference>
<dbReference type="NCBIfam" id="NF005298">
    <property type="entry name" value="PRK06826.1"/>
    <property type="match status" value="1"/>
</dbReference>
<dbReference type="PANTHER" id="PTHR32294">
    <property type="entry name" value="DNA POLYMERASE III SUBUNIT ALPHA"/>
    <property type="match status" value="1"/>
</dbReference>
<dbReference type="PANTHER" id="PTHR32294:SF0">
    <property type="entry name" value="DNA POLYMERASE III SUBUNIT ALPHA"/>
    <property type="match status" value="1"/>
</dbReference>
<dbReference type="Pfam" id="PF07733">
    <property type="entry name" value="DNA_pol3_alpha"/>
    <property type="match status" value="1"/>
</dbReference>
<dbReference type="Pfam" id="PF17657">
    <property type="entry name" value="DNA_pol3_finger"/>
    <property type="match status" value="1"/>
</dbReference>
<dbReference type="Pfam" id="PF14579">
    <property type="entry name" value="HHH_6"/>
    <property type="match status" value="1"/>
</dbReference>
<dbReference type="Pfam" id="PF02811">
    <property type="entry name" value="PHP"/>
    <property type="match status" value="1"/>
</dbReference>
<dbReference type="SMART" id="SM00481">
    <property type="entry name" value="POLIIIAc"/>
    <property type="match status" value="1"/>
</dbReference>
<dbReference type="SUPFAM" id="SSF160975">
    <property type="entry name" value="AF1531-like"/>
    <property type="match status" value="1"/>
</dbReference>
<dbReference type="SUPFAM" id="SSF89550">
    <property type="entry name" value="PHP domain-like"/>
    <property type="match status" value="1"/>
</dbReference>
<evidence type="ECO:0000250" key="1"/>
<evidence type="ECO:0000305" key="2"/>
<evidence type="ECO:0007829" key="3">
    <source>
        <dbReference type="PDB" id="2HPI"/>
    </source>
</evidence>
<evidence type="ECO:0007829" key="4">
    <source>
        <dbReference type="PDB" id="4IQJ"/>
    </source>
</evidence>
<organism>
    <name type="scientific">Thermus aquaticus</name>
    <dbReference type="NCBI Taxonomy" id="271"/>
    <lineage>
        <taxon>Bacteria</taxon>
        <taxon>Thermotogati</taxon>
        <taxon>Deinococcota</taxon>
        <taxon>Deinococci</taxon>
        <taxon>Thermales</taxon>
        <taxon>Thermaceae</taxon>
        <taxon>Thermus</taxon>
    </lineage>
</organism>
<comment type="function">
    <text evidence="1">DNA polymerase III is a complex, multichain enzyme responsible for most of the replicative synthesis in bacteria. This DNA polymerase also exhibits 3' to 5' exonuclease activity. The alpha chain is the DNA polymerase (By similarity).</text>
</comment>
<comment type="catalytic activity">
    <reaction>
        <text>DNA(n) + a 2'-deoxyribonucleoside 5'-triphosphate = DNA(n+1) + diphosphate</text>
        <dbReference type="Rhea" id="RHEA:22508"/>
        <dbReference type="Rhea" id="RHEA-COMP:17339"/>
        <dbReference type="Rhea" id="RHEA-COMP:17340"/>
        <dbReference type="ChEBI" id="CHEBI:33019"/>
        <dbReference type="ChEBI" id="CHEBI:61560"/>
        <dbReference type="ChEBI" id="CHEBI:173112"/>
        <dbReference type="EC" id="2.7.7.7"/>
    </reaction>
</comment>
<comment type="subunit">
    <text evidence="1">DNA polymerase III contains a core (composed of alpha, epsilon and theta chains) that associates with a tau subunit. This core dimerizes to form the PolIII' complex. PolIII' associates with the gamma complex (composed of gamma, delta, delta', psi and chi chains) and with the beta chain to form the complete DNA polymerase III complex (By similarity).</text>
</comment>
<comment type="subcellular location">
    <subcellularLocation>
        <location evidence="1">Cytoplasm</location>
    </subcellularLocation>
</comment>
<comment type="similarity">
    <text evidence="2">Belongs to the DNA polymerase type-C family. DnaE subfamily.</text>
</comment>
<proteinExistence type="evidence at protein level"/>
<keyword id="KW-0002">3D-structure</keyword>
<keyword id="KW-0963">Cytoplasm</keyword>
<keyword id="KW-0235">DNA replication</keyword>
<keyword id="KW-0239">DNA-directed DNA polymerase</keyword>
<keyword id="KW-0548">Nucleotidyltransferase</keyword>
<keyword id="KW-0808">Transferase</keyword>
<reference key="1">
    <citation type="journal article" date="1999" name="J. Mol. Evol.">
        <title>DNA polymerase C of the thermophilic bacterium Thermus aquaticus: classification and phylogenetic analysis of the family C DNA polymerases.</title>
        <authorList>
            <person name="Huang Y.P."/>
            <person name="Ito J."/>
        </authorList>
    </citation>
    <scope>NUCLEOTIDE SEQUENCE [GENOMIC DNA]</scope>
</reference>
<accession>Q9XDH5</accession>
<feature type="chain" id="PRO_0000103354" description="DNA polymerase III subunit alpha">
    <location>
        <begin position="1"/>
        <end position="1220"/>
    </location>
</feature>
<feature type="strand" evidence="4">
    <location>
        <begin position="10"/>
        <end position="12"/>
    </location>
</feature>
<feature type="turn" evidence="3">
    <location>
        <begin position="18"/>
        <end position="20"/>
    </location>
</feature>
<feature type="helix" evidence="3">
    <location>
        <begin position="25"/>
        <end position="35"/>
    </location>
</feature>
<feature type="strand" evidence="3">
    <location>
        <begin position="41"/>
        <end position="48"/>
    </location>
</feature>
<feature type="helix" evidence="3">
    <location>
        <begin position="53"/>
        <end position="61"/>
    </location>
</feature>
<feature type="turn" evidence="3">
    <location>
        <begin position="62"/>
        <end position="64"/>
    </location>
</feature>
<feature type="strand" evidence="3">
    <location>
        <begin position="66"/>
        <end position="78"/>
    </location>
</feature>
<feature type="strand" evidence="3">
    <location>
        <begin position="93"/>
        <end position="100"/>
    </location>
</feature>
<feature type="helix" evidence="3">
    <location>
        <begin position="103"/>
        <end position="118"/>
    </location>
</feature>
<feature type="strand" evidence="3">
    <location>
        <begin position="121"/>
        <end position="127"/>
    </location>
</feature>
<feature type="helix" evidence="3">
    <location>
        <begin position="129"/>
        <end position="134"/>
    </location>
</feature>
<feature type="strand" evidence="3">
    <location>
        <begin position="139"/>
        <end position="142"/>
    </location>
</feature>
<feature type="helix" evidence="3">
    <location>
        <begin position="149"/>
        <end position="155"/>
    </location>
</feature>
<feature type="helix" evidence="3">
    <location>
        <begin position="159"/>
        <end position="173"/>
    </location>
</feature>
<feature type="helix" evidence="3">
    <location>
        <begin position="174"/>
        <end position="176"/>
    </location>
</feature>
<feature type="strand" evidence="3">
    <location>
        <begin position="177"/>
        <end position="181"/>
    </location>
</feature>
<feature type="helix" evidence="3">
    <location>
        <begin position="187"/>
        <end position="202"/>
    </location>
</feature>
<feature type="strand" evidence="3">
    <location>
        <begin position="207"/>
        <end position="209"/>
    </location>
</feature>
<feature type="strand" evidence="3">
    <location>
        <begin position="213"/>
        <end position="217"/>
    </location>
</feature>
<feature type="helix" evidence="3">
    <location>
        <begin position="218"/>
        <end position="220"/>
    </location>
</feature>
<feature type="helix" evidence="3">
    <location>
        <begin position="221"/>
        <end position="231"/>
    </location>
</feature>
<feature type="strand" evidence="3">
    <location>
        <begin position="245"/>
        <end position="247"/>
    </location>
</feature>
<feature type="helix" evidence="3">
    <location>
        <begin position="254"/>
        <end position="260"/>
    </location>
</feature>
<feature type="helix" evidence="3">
    <location>
        <begin position="263"/>
        <end position="266"/>
    </location>
</feature>
<feature type="helix" evidence="3">
    <location>
        <begin position="269"/>
        <end position="279"/>
    </location>
</feature>
<feature type="helix" evidence="3">
    <location>
        <begin position="306"/>
        <end position="321"/>
    </location>
</feature>
<feature type="turn" evidence="3">
    <location>
        <begin position="323"/>
        <end position="325"/>
    </location>
</feature>
<feature type="helix" evidence="3">
    <location>
        <begin position="328"/>
        <end position="335"/>
    </location>
</feature>
<feature type="helix" evidence="3">
    <location>
        <begin position="347"/>
        <end position="356"/>
    </location>
</feature>
<feature type="helix" evidence="3">
    <location>
        <begin position="359"/>
        <end position="362"/>
    </location>
</feature>
<feature type="turn" evidence="3">
    <location>
        <begin position="363"/>
        <end position="367"/>
    </location>
</feature>
<feature type="helix" evidence="3">
    <location>
        <begin position="380"/>
        <end position="397"/>
    </location>
</feature>
<feature type="helix" evidence="3">
    <location>
        <begin position="400"/>
        <end position="414"/>
    </location>
</feature>
<feature type="turn" evidence="3">
    <location>
        <begin position="415"/>
        <end position="417"/>
    </location>
</feature>
<feature type="helix" evidence="3">
    <location>
        <begin position="425"/>
        <end position="429"/>
    </location>
</feature>
<feature type="helix" evidence="3">
    <location>
        <begin position="431"/>
        <end position="435"/>
    </location>
</feature>
<feature type="turn" evidence="3">
    <location>
        <begin position="443"/>
        <end position="447"/>
    </location>
</feature>
<feature type="helix" evidence="3">
    <location>
        <begin position="450"/>
        <end position="453"/>
    </location>
</feature>
<feature type="strand" evidence="3">
    <location>
        <begin position="465"/>
        <end position="469"/>
    </location>
</feature>
<feature type="turn" evidence="3">
    <location>
        <begin position="470"/>
        <end position="472"/>
    </location>
</feature>
<feature type="helix" evidence="3">
    <location>
        <begin position="473"/>
        <end position="484"/>
    </location>
</feature>
<feature type="turn" evidence="3">
    <location>
        <begin position="486"/>
        <end position="488"/>
    </location>
</feature>
<feature type="strand" evidence="3">
    <location>
        <begin position="489"/>
        <end position="497"/>
    </location>
</feature>
<feature type="helix" evidence="3">
    <location>
        <begin position="500"/>
        <end position="510"/>
    </location>
</feature>
<feature type="helix" evidence="3">
    <location>
        <begin position="515"/>
        <end position="522"/>
    </location>
</feature>
<feature type="strand" evidence="3">
    <location>
        <begin position="527"/>
        <end position="532"/>
    </location>
</feature>
<feature type="turn" evidence="3">
    <location>
        <begin position="535"/>
        <end position="537"/>
    </location>
</feature>
<feature type="helix" evidence="3">
    <location>
        <begin position="548"/>
        <end position="551"/>
    </location>
</feature>
<feature type="helix" evidence="3">
    <location>
        <begin position="553"/>
        <end position="564"/>
    </location>
</feature>
<feature type="strand" evidence="4">
    <location>
        <begin position="566"/>
        <end position="568"/>
    </location>
</feature>
<feature type="strand" evidence="3">
    <location>
        <begin position="569"/>
        <end position="581"/>
    </location>
</feature>
<feature type="helix" evidence="3">
    <location>
        <begin position="586"/>
        <end position="588"/>
    </location>
</feature>
<feature type="strand" evidence="3">
    <location>
        <begin position="592"/>
        <end position="594"/>
    </location>
</feature>
<feature type="strand" evidence="3">
    <location>
        <begin position="600"/>
        <end position="604"/>
    </location>
</feature>
<feature type="helix" evidence="3">
    <location>
        <begin position="606"/>
        <end position="610"/>
    </location>
</feature>
<feature type="turn" evidence="3">
    <location>
        <begin position="611"/>
        <end position="613"/>
    </location>
</feature>
<feature type="strand" evidence="3">
    <location>
        <begin position="614"/>
        <end position="622"/>
    </location>
</feature>
<feature type="helix" evidence="3">
    <location>
        <begin position="623"/>
        <end position="639"/>
    </location>
</feature>
<feature type="helix" evidence="3">
    <location>
        <begin position="645"/>
        <end position="647"/>
    </location>
</feature>
<feature type="helix" evidence="3">
    <location>
        <begin position="653"/>
        <end position="660"/>
    </location>
</feature>
<feature type="helix" evidence="3">
    <location>
        <begin position="673"/>
        <end position="682"/>
    </location>
</feature>
<feature type="helix" evidence="3">
    <location>
        <begin position="687"/>
        <end position="696"/>
    </location>
</feature>
<feature type="helix" evidence="3">
    <location>
        <begin position="701"/>
        <end position="703"/>
    </location>
</feature>
<feature type="helix" evidence="3">
    <location>
        <begin position="704"/>
        <end position="712"/>
    </location>
</feature>
<feature type="turn" evidence="3">
    <location>
        <begin position="724"/>
        <end position="726"/>
    </location>
</feature>
<feature type="helix" evidence="3">
    <location>
        <begin position="727"/>
        <end position="734"/>
    </location>
</feature>
<feature type="helix" evidence="3">
    <location>
        <begin position="735"/>
        <end position="737"/>
    </location>
</feature>
<feature type="helix" evidence="3">
    <location>
        <begin position="744"/>
        <end position="754"/>
    </location>
</feature>
<feature type="helix" evidence="3">
    <location>
        <begin position="759"/>
        <end position="771"/>
    </location>
</feature>
<feature type="turn" evidence="3">
    <location>
        <begin position="774"/>
        <end position="776"/>
    </location>
</feature>
<feature type="helix" evidence="3">
    <location>
        <begin position="777"/>
        <end position="791"/>
    </location>
</feature>
<feature type="helix" evidence="3">
    <location>
        <begin position="796"/>
        <end position="808"/>
    </location>
</feature>
<feature type="helix" evidence="4">
    <location>
        <begin position="809"/>
        <end position="811"/>
    </location>
</feature>
<feature type="helix" evidence="3">
    <location>
        <begin position="815"/>
        <end position="834"/>
    </location>
</feature>
<feature type="helix" evidence="3">
    <location>
        <begin position="836"/>
        <end position="846"/>
    </location>
</feature>
<feature type="turn" evidence="3">
    <location>
        <begin position="847"/>
        <end position="849"/>
    </location>
</feature>
<feature type="helix" evidence="3">
    <location>
        <begin position="851"/>
        <end position="862"/>
    </location>
</feature>
<feature type="turn" evidence="3">
    <location>
        <begin position="863"/>
        <end position="865"/>
    </location>
</feature>
<feature type="turn" evidence="3">
    <location>
        <begin position="873"/>
        <end position="875"/>
    </location>
</feature>
<feature type="strand" evidence="3">
    <location>
        <begin position="881"/>
        <end position="883"/>
    </location>
</feature>
<feature type="strand" evidence="3">
    <location>
        <begin position="886"/>
        <end position="888"/>
    </location>
</feature>
<feature type="helix" evidence="4">
    <location>
        <begin position="891"/>
        <end position="893"/>
    </location>
</feature>
<feature type="strand" evidence="3">
    <location>
        <begin position="894"/>
        <end position="896"/>
    </location>
</feature>
<feature type="helix" evidence="3">
    <location>
        <begin position="899"/>
        <end position="911"/>
    </location>
</feature>
<feature type="helix" evidence="3">
    <location>
        <begin position="918"/>
        <end position="924"/>
    </location>
</feature>
<feature type="turn" evidence="3">
    <location>
        <begin position="927"/>
        <end position="929"/>
    </location>
</feature>
<feature type="helix" evidence="3">
    <location>
        <begin position="932"/>
        <end position="941"/>
    </location>
</feature>
<feature type="turn" evidence="3">
    <location>
        <begin position="942"/>
        <end position="944"/>
    </location>
</feature>
<feature type="helix" evidence="3">
    <location>
        <begin position="945"/>
        <end position="947"/>
    </location>
</feature>
<feature type="helix" evidence="3">
    <location>
        <begin position="950"/>
        <end position="971"/>
    </location>
</feature>
<feature type="strand" evidence="3">
    <location>
        <begin position="977"/>
        <end position="980"/>
    </location>
</feature>
<feature type="helix" evidence="3">
    <location>
        <begin position="995"/>
        <end position="1006"/>
    </location>
</feature>
<feature type="helix" evidence="3">
    <location>
        <begin position="1014"/>
        <end position="1017"/>
    </location>
</feature>
<feature type="helix" evidence="3">
    <location>
        <begin position="1020"/>
        <end position="1024"/>
    </location>
</feature>
<feature type="turn" evidence="3">
    <location>
        <begin position="1029"/>
        <end position="1031"/>
    </location>
</feature>
<feature type="helix" evidence="3">
    <location>
        <begin position="1032"/>
        <end position="1036"/>
    </location>
</feature>
<feature type="strand" evidence="3">
    <location>
        <begin position="1037"/>
        <end position="1042"/>
    </location>
</feature>
<feature type="strand" evidence="3">
    <location>
        <begin position="1044"/>
        <end position="1051"/>
    </location>
</feature>
<feature type="strand" evidence="3">
    <location>
        <begin position="1068"/>
        <end position="1072"/>
    </location>
</feature>
<feature type="strand" evidence="3">
    <location>
        <begin position="1075"/>
        <end position="1079"/>
    </location>
</feature>
<feature type="strand" evidence="3">
    <location>
        <begin position="1098"/>
        <end position="1105"/>
    </location>
</feature>
<feature type="strand" evidence="3">
    <location>
        <begin position="1113"/>
        <end position="1120"/>
    </location>
</feature>
<feature type="helix" evidence="3">
    <location>
        <begin position="1121"/>
        <end position="1124"/>
    </location>
</feature>
<feature type="strand" evidence="3">
    <location>
        <begin position="1129"/>
        <end position="1135"/>
    </location>
</feature>
<feature type="turn" evidence="3">
    <location>
        <begin position="1141"/>
        <end position="1143"/>
    </location>
</feature>
<feature type="helix" evidence="3">
    <location>
        <begin position="1147"/>
        <end position="1153"/>
    </location>
</feature>
<feature type="strand" evidence="3">
    <location>
        <begin position="1155"/>
        <end position="1166"/>
    </location>
</feature>
<feature type="strand" evidence="3">
    <location>
        <begin position="1168"/>
        <end position="1181"/>
    </location>
</feature>
<feature type="helix" evidence="3">
    <location>
        <begin position="1185"/>
        <end position="1189"/>
    </location>
</feature>
<feature type="turn" evidence="3">
    <location>
        <begin position="1190"/>
        <end position="1193"/>
    </location>
</feature>
<feature type="strand" evidence="3">
    <location>
        <begin position="1195"/>
        <end position="1200"/>
    </location>
</feature>
<feature type="strand" evidence="4">
    <location>
        <begin position="1208"/>
        <end position="1211"/>
    </location>
</feature>
<feature type="helix" evidence="4">
    <location>
        <begin position="1214"/>
        <end position="1217"/>
    </location>
</feature>
<gene>
    <name type="primary">dnaE</name>
</gene>
<protein>
    <recommendedName>
        <fullName>DNA polymerase III subunit alpha</fullName>
        <ecNumber>2.7.7.7</ecNumber>
    </recommendedName>
</protein>